<name>UCPA_SALTY</name>
<sequence>MGKLTGKTALITGASQGIGEGIARVFARHGANLILLDISDEIEKLADELGGRGHRCTAVKADVRDFASVQAAVARAKETEGRIDILVNNAGVCRLGNFLDMSEEDRDFHIDINIKGVWNVTKAVLPEMIKRKDGRIVMMSSVTGDMVADPGETAYALSKAAIVGLTKSLAVEYAQSGIRVNAICPGYVRTPMAESIARQSNPDDPESVLTEMAKAIPLRRLADPLEVGELAAFLASDESSYLTGTQNVIDGGSTLPESVSVGV</sequence>
<reference key="1">
    <citation type="journal article" date="2001" name="Nature">
        <title>Complete genome sequence of Salmonella enterica serovar Typhimurium LT2.</title>
        <authorList>
            <person name="McClelland M."/>
            <person name="Sanderson K.E."/>
            <person name="Spieth J."/>
            <person name="Clifton S.W."/>
            <person name="Latreille P."/>
            <person name="Courtney L."/>
            <person name="Porwollik S."/>
            <person name="Ali J."/>
            <person name="Dante M."/>
            <person name="Du F."/>
            <person name="Hou S."/>
            <person name="Layman D."/>
            <person name="Leonard S."/>
            <person name="Nguyen C."/>
            <person name="Scott K."/>
            <person name="Holmes A."/>
            <person name="Grewal N."/>
            <person name="Mulvaney E."/>
            <person name="Ryan E."/>
            <person name="Sun H."/>
            <person name="Florea L."/>
            <person name="Miller W."/>
            <person name="Stoneking T."/>
            <person name="Nhan M."/>
            <person name="Waterston R."/>
            <person name="Wilson R.K."/>
        </authorList>
    </citation>
    <scope>NUCLEOTIDE SEQUENCE [LARGE SCALE GENOMIC DNA]</scope>
    <source>
        <strain>LT2 / SGSC1412 / ATCC 700720</strain>
    </source>
</reference>
<reference key="2">
    <citation type="journal article" date="1991" name="J. Bacteriol.">
        <title>The cysP promoter of Salmonella typhimurium: characterization of two binding sites for CysB protein, studies of in vivo transcription initiation, and demonstration of the anti-inducer effects of thiosulfate.</title>
        <authorList>
            <person name="Hryniewicz M.M."/>
            <person name="Kredich N.M."/>
        </authorList>
    </citation>
    <scope>NUCLEOTIDE SEQUENCE [GENOMIC DNA] OF 204-263</scope>
</reference>
<dbReference type="EC" id="1.-.-.-"/>
<dbReference type="EMBL" id="AE006468">
    <property type="protein sequence ID" value="AAL21339.1"/>
    <property type="molecule type" value="Genomic_DNA"/>
</dbReference>
<dbReference type="PIR" id="A38121">
    <property type="entry name" value="A38121"/>
</dbReference>
<dbReference type="RefSeq" id="NP_461380.1">
    <property type="nucleotide sequence ID" value="NC_003197.2"/>
</dbReference>
<dbReference type="RefSeq" id="WP_000517460.1">
    <property type="nucleotide sequence ID" value="NC_003197.2"/>
</dbReference>
<dbReference type="SMR" id="P0A2D1"/>
<dbReference type="STRING" id="99287.STM2445"/>
<dbReference type="PaxDb" id="99287-STM2445"/>
<dbReference type="GeneID" id="1253967"/>
<dbReference type="KEGG" id="stm:STM2445"/>
<dbReference type="PATRIC" id="fig|99287.12.peg.2583"/>
<dbReference type="HOGENOM" id="CLU_010194_1_0_6"/>
<dbReference type="OMA" id="YMTGTDF"/>
<dbReference type="PhylomeDB" id="P0A2D1"/>
<dbReference type="BioCyc" id="SENT99287:STM2445-MONOMER"/>
<dbReference type="Proteomes" id="UP000001014">
    <property type="component" value="Chromosome"/>
</dbReference>
<dbReference type="GO" id="GO:0016491">
    <property type="term" value="F:oxidoreductase activity"/>
    <property type="evidence" value="ECO:0007669"/>
    <property type="project" value="UniProtKB-KW"/>
</dbReference>
<dbReference type="CDD" id="cd05368">
    <property type="entry name" value="DHRS6_like_SDR_c"/>
    <property type="match status" value="1"/>
</dbReference>
<dbReference type="FunFam" id="3.40.50.720:FF:000084">
    <property type="entry name" value="Short-chain dehydrogenase reductase"/>
    <property type="match status" value="1"/>
</dbReference>
<dbReference type="Gene3D" id="3.40.50.720">
    <property type="entry name" value="NAD(P)-binding Rossmann-like Domain"/>
    <property type="match status" value="1"/>
</dbReference>
<dbReference type="InterPro" id="IPR036291">
    <property type="entry name" value="NAD(P)-bd_dom_sf"/>
</dbReference>
<dbReference type="InterPro" id="IPR002347">
    <property type="entry name" value="SDR_fam"/>
</dbReference>
<dbReference type="NCBIfam" id="NF005559">
    <property type="entry name" value="PRK07231.1"/>
    <property type="match status" value="1"/>
</dbReference>
<dbReference type="NCBIfam" id="NF006080">
    <property type="entry name" value="PRK08226.1"/>
    <property type="match status" value="1"/>
</dbReference>
<dbReference type="PANTHER" id="PTHR42760:SF133">
    <property type="entry name" value="3-OXOACYL-[ACYL-CARRIER-PROTEIN] REDUCTASE"/>
    <property type="match status" value="1"/>
</dbReference>
<dbReference type="PANTHER" id="PTHR42760">
    <property type="entry name" value="SHORT-CHAIN DEHYDROGENASES/REDUCTASES FAMILY MEMBER"/>
    <property type="match status" value="1"/>
</dbReference>
<dbReference type="Pfam" id="PF13561">
    <property type="entry name" value="adh_short_C2"/>
    <property type="match status" value="1"/>
</dbReference>
<dbReference type="PRINTS" id="PR00081">
    <property type="entry name" value="GDHRDH"/>
</dbReference>
<dbReference type="PRINTS" id="PR00080">
    <property type="entry name" value="SDRFAMILY"/>
</dbReference>
<dbReference type="SMART" id="SM00822">
    <property type="entry name" value="PKS_KR"/>
    <property type="match status" value="1"/>
</dbReference>
<dbReference type="SUPFAM" id="SSF51735">
    <property type="entry name" value="NAD(P)-binding Rossmann-fold domains"/>
    <property type="match status" value="1"/>
</dbReference>
<keyword id="KW-0560">Oxidoreductase</keyword>
<keyword id="KW-1185">Reference proteome</keyword>
<comment type="similarity">
    <text evidence="2">Belongs to the short-chain dehydrogenases/reductases (SDR) family.</text>
</comment>
<accession>P0A2D1</accession>
<accession>P37441</accession>
<evidence type="ECO:0000250" key="1"/>
<evidence type="ECO:0000305" key="2"/>
<organism>
    <name type="scientific">Salmonella typhimurium (strain LT2 / SGSC1412 / ATCC 700720)</name>
    <dbReference type="NCBI Taxonomy" id="99287"/>
    <lineage>
        <taxon>Bacteria</taxon>
        <taxon>Pseudomonadati</taxon>
        <taxon>Pseudomonadota</taxon>
        <taxon>Gammaproteobacteria</taxon>
        <taxon>Enterobacterales</taxon>
        <taxon>Enterobacteriaceae</taxon>
        <taxon>Salmonella</taxon>
    </lineage>
</organism>
<protein>
    <recommendedName>
        <fullName>Oxidoreductase UcpA</fullName>
        <ecNumber>1.-.-.-</ecNumber>
    </recommendedName>
</protein>
<gene>
    <name type="primary">ucpA</name>
    <name type="ordered locus">STM2445</name>
</gene>
<proteinExistence type="inferred from homology"/>
<feature type="chain" id="PRO_0000054804" description="Oxidoreductase UcpA">
    <location>
        <begin position="1"/>
        <end position="263"/>
    </location>
</feature>
<feature type="active site" description="Proton acceptor" evidence="1">
    <location>
        <position position="155"/>
    </location>
</feature>
<feature type="binding site" evidence="1">
    <location>
        <begin position="10"/>
        <end position="32"/>
    </location>
    <ligand>
        <name>NAD(+)</name>
        <dbReference type="ChEBI" id="CHEBI:57540"/>
    </ligand>
</feature>
<feature type="binding site" evidence="1">
    <location>
        <position position="141"/>
    </location>
    <ligand>
        <name>substrate</name>
    </ligand>
</feature>
<feature type="sequence conflict" description="In Ref. 2." evidence="2" ref="2">
    <original>L</original>
    <variation>M</variation>
    <location>
        <position position="218"/>
    </location>
</feature>
<feature type="sequence conflict" description="In Ref. 2." evidence="2" ref="2">
    <original>S</original>
    <variation>T</variation>
    <location>
        <position position="258"/>
    </location>
</feature>
<feature type="sequence conflict" description="In Ref. 2." evidence="2" ref="2">
    <original>V</original>
    <variation>I</variation>
    <location>
        <position position="263"/>
    </location>
</feature>